<proteinExistence type="inferred from homology"/>
<name>ATP6_SACD2</name>
<comment type="function">
    <text evidence="1">Key component of the proton channel; it plays a direct role in the translocation of protons across the membrane.</text>
</comment>
<comment type="subunit">
    <text evidence="1">F-type ATPases have 2 components, CF(1) - the catalytic core - and CF(0) - the membrane proton channel. CF(1) has five subunits: alpha(3), beta(3), gamma(1), delta(1), epsilon(1). CF(0) has three main subunits: a(1), b(2) and c(9-12). The alpha and beta chains form an alternating ring which encloses part of the gamma chain. CF(1) is attached to CF(0) by a central stalk formed by the gamma and epsilon chains, while a peripheral stalk is formed by the delta and b chains.</text>
</comment>
<comment type="subcellular location">
    <subcellularLocation>
        <location evidence="1">Cell inner membrane</location>
        <topology evidence="1">Multi-pass membrane protein</topology>
    </subcellularLocation>
</comment>
<comment type="similarity">
    <text evidence="1">Belongs to the ATPase A chain family.</text>
</comment>
<sequence>MASSEELTATGYIQHHLQNLTYGKLPAGYVRHNADGTHTELAANTWTFAHTAQEAKDMGFMAVHVDTLGWGIFLALLLGFIFRSAVKKAHTGKPSGLLSFVEFLVEGINSVVKDIFHHKNRLIAPMGLTIFSWVFMMNLMDLIPVDWLPMLAQVVTGDSHTFFKVVPTTDPNATLGMAFTVFALMIMFSIKEKGALGFVKELTCHPFFAPKKLWYLNILLIPVNTILETVALIAKPISLGLRLFGNMYAGEMIFILIALLFSVGLVMGFVGGVLQWAWAVFHILVITLQAFIFMVLTTVYMAMAHDNHDEH</sequence>
<keyword id="KW-0066">ATP synthesis</keyword>
<keyword id="KW-0997">Cell inner membrane</keyword>
<keyword id="KW-1003">Cell membrane</keyword>
<keyword id="KW-0138">CF(0)</keyword>
<keyword id="KW-0375">Hydrogen ion transport</keyword>
<keyword id="KW-0406">Ion transport</keyword>
<keyword id="KW-0472">Membrane</keyword>
<keyword id="KW-1185">Reference proteome</keyword>
<keyword id="KW-0812">Transmembrane</keyword>
<keyword id="KW-1133">Transmembrane helix</keyword>
<keyword id="KW-0813">Transport</keyword>
<protein>
    <recommendedName>
        <fullName evidence="1">ATP synthase subunit a</fullName>
    </recommendedName>
    <alternativeName>
        <fullName evidence="1">ATP synthase F0 sector subunit a</fullName>
    </alternativeName>
    <alternativeName>
        <fullName evidence="1">F-ATPase subunit 6</fullName>
    </alternativeName>
</protein>
<gene>
    <name evidence="1" type="primary">atpB</name>
    <name type="ordered locus">Sde_3972</name>
</gene>
<organism>
    <name type="scientific">Saccharophagus degradans (strain 2-40 / ATCC 43961 / DSM 17024)</name>
    <dbReference type="NCBI Taxonomy" id="203122"/>
    <lineage>
        <taxon>Bacteria</taxon>
        <taxon>Pseudomonadati</taxon>
        <taxon>Pseudomonadota</taxon>
        <taxon>Gammaproteobacteria</taxon>
        <taxon>Cellvibrionales</taxon>
        <taxon>Cellvibrionaceae</taxon>
        <taxon>Saccharophagus</taxon>
    </lineage>
</organism>
<reference key="1">
    <citation type="journal article" date="2008" name="PLoS Genet.">
        <title>Complete genome sequence of the complex carbohydrate-degrading marine bacterium, Saccharophagus degradans strain 2-40 T.</title>
        <authorList>
            <person name="Weiner R.M."/>
            <person name="Taylor L.E. II"/>
            <person name="Henrissat B."/>
            <person name="Hauser L."/>
            <person name="Land M."/>
            <person name="Coutinho P.M."/>
            <person name="Rancurel C."/>
            <person name="Saunders E.H."/>
            <person name="Longmire A.G."/>
            <person name="Zhang H."/>
            <person name="Bayer E.A."/>
            <person name="Gilbert H.J."/>
            <person name="Larimer F."/>
            <person name="Zhulin I.B."/>
            <person name="Ekborg N.A."/>
            <person name="Lamed R."/>
            <person name="Richardson P.M."/>
            <person name="Borovok I."/>
            <person name="Hutcheson S."/>
        </authorList>
    </citation>
    <scope>NUCLEOTIDE SEQUENCE [LARGE SCALE GENOMIC DNA]</scope>
    <source>
        <strain>2-40 / ATCC 43961 / DSM 17024</strain>
    </source>
</reference>
<accession>Q21DK2</accession>
<dbReference type="EMBL" id="CP000282">
    <property type="protein sequence ID" value="ABD83227.1"/>
    <property type="molecule type" value="Genomic_DNA"/>
</dbReference>
<dbReference type="RefSeq" id="WP_011470442.1">
    <property type="nucleotide sequence ID" value="NC_007912.1"/>
</dbReference>
<dbReference type="SMR" id="Q21DK2"/>
<dbReference type="STRING" id="203122.Sde_3972"/>
<dbReference type="GeneID" id="98615565"/>
<dbReference type="KEGG" id="sde:Sde_3972"/>
<dbReference type="eggNOG" id="COG0356">
    <property type="taxonomic scope" value="Bacteria"/>
</dbReference>
<dbReference type="HOGENOM" id="CLU_041018_1_0_6"/>
<dbReference type="OrthoDB" id="9789241at2"/>
<dbReference type="Proteomes" id="UP000001947">
    <property type="component" value="Chromosome"/>
</dbReference>
<dbReference type="GO" id="GO:0005886">
    <property type="term" value="C:plasma membrane"/>
    <property type="evidence" value="ECO:0007669"/>
    <property type="project" value="UniProtKB-SubCell"/>
</dbReference>
<dbReference type="GO" id="GO:0045259">
    <property type="term" value="C:proton-transporting ATP synthase complex"/>
    <property type="evidence" value="ECO:0007669"/>
    <property type="project" value="UniProtKB-KW"/>
</dbReference>
<dbReference type="GO" id="GO:0046933">
    <property type="term" value="F:proton-transporting ATP synthase activity, rotational mechanism"/>
    <property type="evidence" value="ECO:0007669"/>
    <property type="project" value="UniProtKB-UniRule"/>
</dbReference>
<dbReference type="GO" id="GO:0042777">
    <property type="term" value="P:proton motive force-driven plasma membrane ATP synthesis"/>
    <property type="evidence" value="ECO:0007669"/>
    <property type="project" value="TreeGrafter"/>
</dbReference>
<dbReference type="CDD" id="cd00310">
    <property type="entry name" value="ATP-synt_Fo_a_6"/>
    <property type="match status" value="1"/>
</dbReference>
<dbReference type="FunFam" id="1.20.120.220:FF:000002">
    <property type="entry name" value="ATP synthase subunit a"/>
    <property type="match status" value="1"/>
</dbReference>
<dbReference type="Gene3D" id="1.20.120.220">
    <property type="entry name" value="ATP synthase, F0 complex, subunit A"/>
    <property type="match status" value="1"/>
</dbReference>
<dbReference type="HAMAP" id="MF_01393">
    <property type="entry name" value="ATP_synth_a_bact"/>
    <property type="match status" value="1"/>
</dbReference>
<dbReference type="InterPro" id="IPR045082">
    <property type="entry name" value="ATP_syn_F0_a_bact/chloroplast"/>
</dbReference>
<dbReference type="InterPro" id="IPR000568">
    <property type="entry name" value="ATP_synth_F0_asu"/>
</dbReference>
<dbReference type="InterPro" id="IPR023011">
    <property type="entry name" value="ATP_synth_F0_asu_AS"/>
</dbReference>
<dbReference type="InterPro" id="IPR035908">
    <property type="entry name" value="F0_ATP_A_sf"/>
</dbReference>
<dbReference type="NCBIfam" id="TIGR01131">
    <property type="entry name" value="ATP_synt_6_or_A"/>
    <property type="match status" value="1"/>
</dbReference>
<dbReference type="NCBIfam" id="NF004477">
    <property type="entry name" value="PRK05815.1-1"/>
    <property type="match status" value="1"/>
</dbReference>
<dbReference type="PANTHER" id="PTHR42823">
    <property type="entry name" value="ATP SYNTHASE SUBUNIT A, CHLOROPLASTIC"/>
    <property type="match status" value="1"/>
</dbReference>
<dbReference type="PANTHER" id="PTHR42823:SF3">
    <property type="entry name" value="ATP SYNTHASE SUBUNIT A, CHLOROPLASTIC"/>
    <property type="match status" value="1"/>
</dbReference>
<dbReference type="Pfam" id="PF00119">
    <property type="entry name" value="ATP-synt_A"/>
    <property type="match status" value="1"/>
</dbReference>
<dbReference type="SUPFAM" id="SSF81336">
    <property type="entry name" value="F1F0 ATP synthase subunit A"/>
    <property type="match status" value="1"/>
</dbReference>
<dbReference type="PROSITE" id="PS00449">
    <property type="entry name" value="ATPASE_A"/>
    <property type="match status" value="1"/>
</dbReference>
<feature type="chain" id="PRO_1000184288" description="ATP synthase subunit a">
    <location>
        <begin position="1"/>
        <end position="311"/>
    </location>
</feature>
<feature type="transmembrane region" description="Helical" evidence="1">
    <location>
        <begin position="62"/>
        <end position="82"/>
    </location>
</feature>
<feature type="transmembrane region" description="Helical" evidence="1">
    <location>
        <begin position="123"/>
        <end position="143"/>
    </location>
</feature>
<feature type="transmembrane region" description="Helical" evidence="1">
    <location>
        <begin position="170"/>
        <end position="190"/>
    </location>
</feature>
<feature type="transmembrane region" description="Helical" evidence="1">
    <location>
        <begin position="213"/>
        <end position="233"/>
    </location>
</feature>
<feature type="transmembrane region" description="Helical" evidence="1">
    <location>
        <begin position="253"/>
        <end position="273"/>
    </location>
</feature>
<feature type="transmembrane region" description="Helical" evidence="1">
    <location>
        <begin position="276"/>
        <end position="296"/>
    </location>
</feature>
<evidence type="ECO:0000255" key="1">
    <source>
        <dbReference type="HAMAP-Rule" id="MF_01393"/>
    </source>
</evidence>